<evidence type="ECO:0000255" key="1">
    <source>
        <dbReference type="HAMAP-Rule" id="MF_00222"/>
    </source>
</evidence>
<protein>
    <recommendedName>
        <fullName evidence="1">Shikimate dehydrogenase (NADP(+))</fullName>
        <shortName evidence="1">SDH</shortName>
        <ecNumber evidence="1">1.1.1.25</ecNumber>
    </recommendedName>
</protein>
<proteinExistence type="inferred from homology"/>
<dbReference type="EC" id="1.1.1.25" evidence="1"/>
<dbReference type="EMBL" id="CP000083">
    <property type="protein sequence ID" value="AAZ27050.1"/>
    <property type="molecule type" value="Genomic_DNA"/>
</dbReference>
<dbReference type="RefSeq" id="WP_011040920.1">
    <property type="nucleotide sequence ID" value="NC_003910.7"/>
</dbReference>
<dbReference type="SMR" id="Q48AV5"/>
<dbReference type="STRING" id="167879.CPS_0030"/>
<dbReference type="KEGG" id="cps:CPS_0030"/>
<dbReference type="HOGENOM" id="CLU_044063_2_1_6"/>
<dbReference type="UniPathway" id="UPA00053">
    <property type="reaction ID" value="UER00087"/>
</dbReference>
<dbReference type="Proteomes" id="UP000000547">
    <property type="component" value="Chromosome"/>
</dbReference>
<dbReference type="GO" id="GO:0005829">
    <property type="term" value="C:cytosol"/>
    <property type="evidence" value="ECO:0007669"/>
    <property type="project" value="TreeGrafter"/>
</dbReference>
<dbReference type="GO" id="GO:0050661">
    <property type="term" value="F:NADP binding"/>
    <property type="evidence" value="ECO:0007669"/>
    <property type="project" value="InterPro"/>
</dbReference>
<dbReference type="GO" id="GO:0004764">
    <property type="term" value="F:shikimate 3-dehydrogenase (NADP+) activity"/>
    <property type="evidence" value="ECO:0007669"/>
    <property type="project" value="UniProtKB-UniRule"/>
</dbReference>
<dbReference type="GO" id="GO:0008652">
    <property type="term" value="P:amino acid biosynthetic process"/>
    <property type="evidence" value="ECO:0007669"/>
    <property type="project" value="UniProtKB-KW"/>
</dbReference>
<dbReference type="GO" id="GO:0009073">
    <property type="term" value="P:aromatic amino acid family biosynthetic process"/>
    <property type="evidence" value="ECO:0007669"/>
    <property type="project" value="UniProtKB-KW"/>
</dbReference>
<dbReference type="GO" id="GO:0009423">
    <property type="term" value="P:chorismate biosynthetic process"/>
    <property type="evidence" value="ECO:0007669"/>
    <property type="project" value="UniProtKB-UniRule"/>
</dbReference>
<dbReference type="GO" id="GO:0019632">
    <property type="term" value="P:shikimate metabolic process"/>
    <property type="evidence" value="ECO:0007669"/>
    <property type="project" value="InterPro"/>
</dbReference>
<dbReference type="CDD" id="cd01065">
    <property type="entry name" value="NAD_bind_Shikimate_DH"/>
    <property type="match status" value="1"/>
</dbReference>
<dbReference type="FunFam" id="3.40.50.10860:FF:000006">
    <property type="entry name" value="Shikimate dehydrogenase (NADP(+))"/>
    <property type="match status" value="1"/>
</dbReference>
<dbReference type="FunFam" id="3.40.50.720:FF:000104">
    <property type="entry name" value="Shikimate dehydrogenase (NADP(+))"/>
    <property type="match status" value="1"/>
</dbReference>
<dbReference type="Gene3D" id="3.40.50.10860">
    <property type="entry name" value="Leucine Dehydrogenase, chain A, domain 1"/>
    <property type="match status" value="1"/>
</dbReference>
<dbReference type="Gene3D" id="3.40.50.720">
    <property type="entry name" value="NAD(P)-binding Rossmann-like Domain"/>
    <property type="match status" value="1"/>
</dbReference>
<dbReference type="HAMAP" id="MF_00222">
    <property type="entry name" value="Shikimate_DH_AroE"/>
    <property type="match status" value="1"/>
</dbReference>
<dbReference type="InterPro" id="IPR046346">
    <property type="entry name" value="Aminoacid_DH-like_N_sf"/>
</dbReference>
<dbReference type="InterPro" id="IPR036291">
    <property type="entry name" value="NAD(P)-bd_dom_sf"/>
</dbReference>
<dbReference type="InterPro" id="IPR041121">
    <property type="entry name" value="SDH_C"/>
</dbReference>
<dbReference type="InterPro" id="IPR011342">
    <property type="entry name" value="Shikimate_DH"/>
</dbReference>
<dbReference type="InterPro" id="IPR013708">
    <property type="entry name" value="Shikimate_DH-bd_N"/>
</dbReference>
<dbReference type="InterPro" id="IPR022893">
    <property type="entry name" value="Shikimate_DH_fam"/>
</dbReference>
<dbReference type="InterPro" id="IPR006151">
    <property type="entry name" value="Shikm_DH/Glu-tRNA_Rdtase"/>
</dbReference>
<dbReference type="NCBIfam" id="TIGR00507">
    <property type="entry name" value="aroE"/>
    <property type="match status" value="1"/>
</dbReference>
<dbReference type="NCBIfam" id="NF001310">
    <property type="entry name" value="PRK00258.1-2"/>
    <property type="match status" value="1"/>
</dbReference>
<dbReference type="PANTHER" id="PTHR21089:SF1">
    <property type="entry name" value="BIFUNCTIONAL 3-DEHYDROQUINATE DEHYDRATASE_SHIKIMATE DEHYDROGENASE, CHLOROPLASTIC"/>
    <property type="match status" value="1"/>
</dbReference>
<dbReference type="PANTHER" id="PTHR21089">
    <property type="entry name" value="SHIKIMATE DEHYDROGENASE"/>
    <property type="match status" value="1"/>
</dbReference>
<dbReference type="Pfam" id="PF18317">
    <property type="entry name" value="SDH_C"/>
    <property type="match status" value="1"/>
</dbReference>
<dbReference type="Pfam" id="PF01488">
    <property type="entry name" value="Shikimate_DH"/>
    <property type="match status" value="1"/>
</dbReference>
<dbReference type="Pfam" id="PF08501">
    <property type="entry name" value="Shikimate_dh_N"/>
    <property type="match status" value="1"/>
</dbReference>
<dbReference type="SUPFAM" id="SSF53223">
    <property type="entry name" value="Aminoacid dehydrogenase-like, N-terminal domain"/>
    <property type="match status" value="1"/>
</dbReference>
<dbReference type="SUPFAM" id="SSF51735">
    <property type="entry name" value="NAD(P)-binding Rossmann-fold domains"/>
    <property type="match status" value="1"/>
</dbReference>
<accession>Q48AV5</accession>
<feature type="chain" id="PRO_0000325113" description="Shikimate dehydrogenase (NADP(+))">
    <location>
        <begin position="1"/>
        <end position="275"/>
    </location>
</feature>
<feature type="active site" description="Proton acceptor" evidence="1">
    <location>
        <position position="70"/>
    </location>
</feature>
<feature type="binding site" evidence="1">
    <location>
        <begin position="19"/>
        <end position="21"/>
    </location>
    <ligand>
        <name>shikimate</name>
        <dbReference type="ChEBI" id="CHEBI:36208"/>
    </ligand>
</feature>
<feature type="binding site" evidence="1">
    <location>
        <position position="66"/>
    </location>
    <ligand>
        <name>shikimate</name>
        <dbReference type="ChEBI" id="CHEBI:36208"/>
    </ligand>
</feature>
<feature type="binding site" evidence="1">
    <location>
        <position position="82"/>
    </location>
    <ligand>
        <name>NADP(+)</name>
        <dbReference type="ChEBI" id="CHEBI:58349"/>
    </ligand>
</feature>
<feature type="binding site" evidence="1">
    <location>
        <position position="91"/>
    </location>
    <ligand>
        <name>shikimate</name>
        <dbReference type="ChEBI" id="CHEBI:36208"/>
    </ligand>
</feature>
<feature type="binding site" evidence="1">
    <location>
        <position position="106"/>
    </location>
    <ligand>
        <name>shikimate</name>
        <dbReference type="ChEBI" id="CHEBI:36208"/>
    </ligand>
</feature>
<feature type="binding site" evidence="1">
    <location>
        <begin position="130"/>
        <end position="134"/>
    </location>
    <ligand>
        <name>NADP(+)</name>
        <dbReference type="ChEBI" id="CHEBI:58349"/>
    </ligand>
</feature>
<feature type="binding site" evidence="1">
    <location>
        <begin position="154"/>
        <end position="159"/>
    </location>
    <ligand>
        <name>NADP(+)</name>
        <dbReference type="ChEBI" id="CHEBI:58349"/>
    </ligand>
</feature>
<feature type="binding site" evidence="1">
    <location>
        <position position="217"/>
    </location>
    <ligand>
        <name>NADP(+)</name>
        <dbReference type="ChEBI" id="CHEBI:58349"/>
    </ligand>
</feature>
<feature type="binding site" evidence="1">
    <location>
        <position position="219"/>
    </location>
    <ligand>
        <name>shikimate</name>
        <dbReference type="ChEBI" id="CHEBI:36208"/>
    </ligand>
</feature>
<feature type="binding site" evidence="1">
    <location>
        <position position="241"/>
    </location>
    <ligand>
        <name>NADP(+)</name>
        <dbReference type="ChEBI" id="CHEBI:58349"/>
    </ligand>
</feature>
<gene>
    <name evidence="1" type="primary">aroE</name>
    <name type="ordered locus">CPS_0030</name>
</gene>
<name>AROE_COLP3</name>
<sequence>MTQQTPDQYRVFGNPIEQSKSPAIHHIFADKSQQNIDYQKQLVDTKDFSNAVADFIRHGGKGANVTAPFKEQALAIADELTERATLAGAVNTLTFKNGKIFGDNTDGEGLVQDLITNKVILNESRVLLLGAGGAARGVLLPLLAQNPRSIVIANRTASKAATLCQHFSDIRLSASGYQDLEQQHFDVIINATSASLSGNLPPIPTSLLSQNVVCYDMVYGKDETPFLKWAKEHGAMKVIDGLGMLVGQAAVSFEVWRGVTPEVQPVIDKLRASLK</sequence>
<reference key="1">
    <citation type="journal article" date="2005" name="Proc. Natl. Acad. Sci. U.S.A.">
        <title>The psychrophilic lifestyle as revealed by the genome sequence of Colwellia psychrerythraea 34H through genomic and proteomic analyses.</title>
        <authorList>
            <person name="Methe B.A."/>
            <person name="Nelson K.E."/>
            <person name="Deming J.W."/>
            <person name="Momen B."/>
            <person name="Melamud E."/>
            <person name="Zhang X."/>
            <person name="Moult J."/>
            <person name="Madupu R."/>
            <person name="Nelson W.C."/>
            <person name="Dodson R.J."/>
            <person name="Brinkac L.M."/>
            <person name="Daugherty S.C."/>
            <person name="Durkin A.S."/>
            <person name="DeBoy R.T."/>
            <person name="Kolonay J.F."/>
            <person name="Sullivan S.A."/>
            <person name="Zhou L."/>
            <person name="Davidsen T.M."/>
            <person name="Wu M."/>
            <person name="Huston A.L."/>
            <person name="Lewis M."/>
            <person name="Weaver B."/>
            <person name="Weidman J.F."/>
            <person name="Khouri H."/>
            <person name="Utterback T.R."/>
            <person name="Feldblyum T.V."/>
            <person name="Fraser C.M."/>
        </authorList>
    </citation>
    <scope>NUCLEOTIDE SEQUENCE [LARGE SCALE GENOMIC DNA]</scope>
    <source>
        <strain>34H / ATCC BAA-681</strain>
    </source>
</reference>
<keyword id="KW-0028">Amino-acid biosynthesis</keyword>
<keyword id="KW-0057">Aromatic amino acid biosynthesis</keyword>
<keyword id="KW-0521">NADP</keyword>
<keyword id="KW-0560">Oxidoreductase</keyword>
<organism>
    <name type="scientific">Colwellia psychrerythraea (strain 34H / ATCC BAA-681)</name>
    <name type="common">Vibrio psychroerythus</name>
    <dbReference type="NCBI Taxonomy" id="167879"/>
    <lineage>
        <taxon>Bacteria</taxon>
        <taxon>Pseudomonadati</taxon>
        <taxon>Pseudomonadota</taxon>
        <taxon>Gammaproteobacteria</taxon>
        <taxon>Alteromonadales</taxon>
        <taxon>Colwelliaceae</taxon>
        <taxon>Colwellia</taxon>
    </lineage>
</organism>
<comment type="function">
    <text evidence="1">Involved in the biosynthesis of the chorismate, which leads to the biosynthesis of aromatic amino acids. Catalyzes the reversible NADPH linked reduction of 3-dehydroshikimate (DHSA) to yield shikimate (SA).</text>
</comment>
<comment type="catalytic activity">
    <reaction evidence="1">
        <text>shikimate + NADP(+) = 3-dehydroshikimate + NADPH + H(+)</text>
        <dbReference type="Rhea" id="RHEA:17737"/>
        <dbReference type="ChEBI" id="CHEBI:15378"/>
        <dbReference type="ChEBI" id="CHEBI:16630"/>
        <dbReference type="ChEBI" id="CHEBI:36208"/>
        <dbReference type="ChEBI" id="CHEBI:57783"/>
        <dbReference type="ChEBI" id="CHEBI:58349"/>
        <dbReference type="EC" id="1.1.1.25"/>
    </reaction>
</comment>
<comment type="pathway">
    <text evidence="1">Metabolic intermediate biosynthesis; chorismate biosynthesis; chorismate from D-erythrose 4-phosphate and phosphoenolpyruvate: step 4/7.</text>
</comment>
<comment type="subunit">
    <text evidence="1">Homodimer.</text>
</comment>
<comment type="similarity">
    <text evidence="1">Belongs to the shikimate dehydrogenase family.</text>
</comment>